<feature type="chain" id="PRO_0000196407" description="DNA replication and repair protein RecF">
    <location>
        <begin position="1"/>
        <end position="361"/>
    </location>
</feature>
<feature type="binding site" evidence="1">
    <location>
        <begin position="30"/>
        <end position="37"/>
    </location>
    <ligand>
        <name>ATP</name>
        <dbReference type="ChEBI" id="CHEBI:30616"/>
    </ligand>
</feature>
<protein>
    <recommendedName>
        <fullName evidence="1">DNA replication and repair protein RecF</fullName>
    </recommendedName>
</protein>
<evidence type="ECO:0000255" key="1">
    <source>
        <dbReference type="HAMAP-Rule" id="MF_00365"/>
    </source>
</evidence>
<dbReference type="EMBL" id="BA000016">
    <property type="protein sequence ID" value="BAB79710.1"/>
    <property type="molecule type" value="Genomic_DNA"/>
</dbReference>
<dbReference type="RefSeq" id="WP_003450989.1">
    <property type="nucleotide sequence ID" value="NC_003366.1"/>
</dbReference>
<dbReference type="SMR" id="Q8XPF9"/>
<dbReference type="STRING" id="195102.gene:10489223"/>
<dbReference type="GeneID" id="93000721"/>
<dbReference type="KEGG" id="cpe:CPE0004"/>
<dbReference type="HOGENOM" id="CLU_040267_0_1_9"/>
<dbReference type="Proteomes" id="UP000000818">
    <property type="component" value="Chromosome"/>
</dbReference>
<dbReference type="GO" id="GO:0005737">
    <property type="term" value="C:cytoplasm"/>
    <property type="evidence" value="ECO:0007669"/>
    <property type="project" value="UniProtKB-SubCell"/>
</dbReference>
<dbReference type="GO" id="GO:0005524">
    <property type="term" value="F:ATP binding"/>
    <property type="evidence" value="ECO:0007669"/>
    <property type="project" value="UniProtKB-UniRule"/>
</dbReference>
<dbReference type="GO" id="GO:0003697">
    <property type="term" value="F:single-stranded DNA binding"/>
    <property type="evidence" value="ECO:0007669"/>
    <property type="project" value="UniProtKB-UniRule"/>
</dbReference>
<dbReference type="GO" id="GO:0006260">
    <property type="term" value="P:DNA replication"/>
    <property type="evidence" value="ECO:0007669"/>
    <property type="project" value="UniProtKB-UniRule"/>
</dbReference>
<dbReference type="GO" id="GO:0000731">
    <property type="term" value="P:DNA synthesis involved in DNA repair"/>
    <property type="evidence" value="ECO:0007669"/>
    <property type="project" value="TreeGrafter"/>
</dbReference>
<dbReference type="GO" id="GO:0006302">
    <property type="term" value="P:double-strand break repair"/>
    <property type="evidence" value="ECO:0007669"/>
    <property type="project" value="TreeGrafter"/>
</dbReference>
<dbReference type="GO" id="GO:0009432">
    <property type="term" value="P:SOS response"/>
    <property type="evidence" value="ECO:0007669"/>
    <property type="project" value="UniProtKB-UniRule"/>
</dbReference>
<dbReference type="CDD" id="cd03242">
    <property type="entry name" value="ABC_RecF"/>
    <property type="match status" value="1"/>
</dbReference>
<dbReference type="Gene3D" id="3.40.50.300">
    <property type="entry name" value="P-loop containing nucleotide triphosphate hydrolases"/>
    <property type="match status" value="1"/>
</dbReference>
<dbReference type="Gene3D" id="1.20.1050.90">
    <property type="entry name" value="RecF/RecN/SMC, N-terminal domain"/>
    <property type="match status" value="1"/>
</dbReference>
<dbReference type="HAMAP" id="MF_00365">
    <property type="entry name" value="RecF"/>
    <property type="match status" value="1"/>
</dbReference>
<dbReference type="InterPro" id="IPR001238">
    <property type="entry name" value="DNA-binding_RecF"/>
</dbReference>
<dbReference type="InterPro" id="IPR018078">
    <property type="entry name" value="DNA-binding_RecF_CS"/>
</dbReference>
<dbReference type="InterPro" id="IPR027417">
    <property type="entry name" value="P-loop_NTPase"/>
</dbReference>
<dbReference type="InterPro" id="IPR003395">
    <property type="entry name" value="RecF/RecN/SMC_N"/>
</dbReference>
<dbReference type="InterPro" id="IPR042174">
    <property type="entry name" value="RecF_2"/>
</dbReference>
<dbReference type="NCBIfam" id="TIGR00611">
    <property type="entry name" value="recf"/>
    <property type="match status" value="1"/>
</dbReference>
<dbReference type="PANTHER" id="PTHR32182">
    <property type="entry name" value="DNA REPLICATION AND REPAIR PROTEIN RECF"/>
    <property type="match status" value="1"/>
</dbReference>
<dbReference type="PANTHER" id="PTHR32182:SF0">
    <property type="entry name" value="DNA REPLICATION AND REPAIR PROTEIN RECF"/>
    <property type="match status" value="1"/>
</dbReference>
<dbReference type="Pfam" id="PF02463">
    <property type="entry name" value="SMC_N"/>
    <property type="match status" value="1"/>
</dbReference>
<dbReference type="SUPFAM" id="SSF52540">
    <property type="entry name" value="P-loop containing nucleoside triphosphate hydrolases"/>
    <property type="match status" value="1"/>
</dbReference>
<dbReference type="PROSITE" id="PS00617">
    <property type="entry name" value="RECF_1"/>
    <property type="match status" value="1"/>
</dbReference>
<dbReference type="PROSITE" id="PS00618">
    <property type="entry name" value="RECF_2"/>
    <property type="match status" value="1"/>
</dbReference>
<sequence>MYIKSLQLINYRNYENLSIKLCPNVNVFIGDNAQGKTNVIEAIYYCGFAKSHRTNRDKELIEWNKDRAFIRLDVHKDRLDKIIDVNILKDGKKAISINSIKISKIGELIGTFNVVMFSPEDLKIVKESPGIRRRFIDMELSQLNKRYYHNLVQYNKVLHERNLVLKNKNINEEMLDIYDIQLAQYGENIIKTRLKYIEQLNKYSKEIHKEITSGKEEIEFKYISTVKDLDNIKDSMIKLLEQNRKKDIDKRATSIGPHRDDFNIYLNNIDAKIYGSQGQQRTSVLTIKFASLKIIKEITGEYPVLLLDDVLSELDFNRKRYVLTSIKNIQTVITCTGIEDLTSYLDENSKVFRVINGRIQC</sequence>
<comment type="function">
    <text evidence="1">The RecF protein is involved in DNA metabolism; it is required for DNA replication and normal SOS inducibility. RecF binds preferentially to single-stranded, linear DNA. It also seems to bind ATP.</text>
</comment>
<comment type="subcellular location">
    <subcellularLocation>
        <location evidence="1">Cytoplasm</location>
    </subcellularLocation>
</comment>
<comment type="similarity">
    <text evidence="1">Belongs to the RecF family.</text>
</comment>
<name>RECF_CLOPE</name>
<proteinExistence type="inferred from homology"/>
<accession>Q8XPF9</accession>
<keyword id="KW-0067">ATP-binding</keyword>
<keyword id="KW-0963">Cytoplasm</keyword>
<keyword id="KW-0227">DNA damage</keyword>
<keyword id="KW-0234">DNA repair</keyword>
<keyword id="KW-0235">DNA replication</keyword>
<keyword id="KW-0238">DNA-binding</keyword>
<keyword id="KW-0547">Nucleotide-binding</keyword>
<keyword id="KW-1185">Reference proteome</keyword>
<keyword id="KW-0742">SOS response</keyword>
<organism>
    <name type="scientific">Clostridium perfringens (strain 13 / Type A)</name>
    <dbReference type="NCBI Taxonomy" id="195102"/>
    <lineage>
        <taxon>Bacteria</taxon>
        <taxon>Bacillati</taxon>
        <taxon>Bacillota</taxon>
        <taxon>Clostridia</taxon>
        <taxon>Eubacteriales</taxon>
        <taxon>Clostridiaceae</taxon>
        <taxon>Clostridium</taxon>
    </lineage>
</organism>
<reference key="1">
    <citation type="journal article" date="2002" name="Proc. Natl. Acad. Sci. U.S.A.">
        <title>Complete genome sequence of Clostridium perfringens, an anaerobic flesh-eater.</title>
        <authorList>
            <person name="Shimizu T."/>
            <person name="Ohtani K."/>
            <person name="Hirakawa H."/>
            <person name="Ohshima K."/>
            <person name="Yamashita A."/>
            <person name="Shiba T."/>
            <person name="Ogasawara N."/>
            <person name="Hattori M."/>
            <person name="Kuhara S."/>
            <person name="Hayashi H."/>
        </authorList>
    </citation>
    <scope>NUCLEOTIDE SEQUENCE [LARGE SCALE GENOMIC DNA]</scope>
    <source>
        <strain>13 / Type A</strain>
    </source>
</reference>
<gene>
    <name evidence="1" type="primary">recF</name>
    <name type="ordered locus">CPE0004</name>
</gene>